<dbReference type="EMBL" id="AK010398">
    <property type="protein sequence ID" value="BAB26909.1"/>
    <property type="molecule type" value="mRNA"/>
</dbReference>
<dbReference type="EMBL" id="BC003935">
    <property type="protein sequence ID" value="AAH03935.1"/>
    <property type="molecule type" value="mRNA"/>
</dbReference>
<dbReference type="CCDS" id="CCDS22389.1">
    <molecule id="Q99L00-2"/>
</dbReference>
<dbReference type="CCDS" id="CCDS52579.1">
    <molecule id="Q99L00-1"/>
</dbReference>
<dbReference type="RefSeq" id="NP_001156514.1">
    <molecule id="Q99L00-1"/>
    <property type="nucleotide sequence ID" value="NM_001163042.1"/>
</dbReference>
<dbReference type="RefSeq" id="NP_083897.2">
    <molecule id="Q99L00-2"/>
    <property type="nucleotide sequence ID" value="NM_029621.3"/>
</dbReference>
<dbReference type="SMR" id="Q99L00"/>
<dbReference type="BioGRID" id="218144">
    <property type="interactions" value="7"/>
</dbReference>
<dbReference type="FunCoup" id="Q99L00">
    <property type="interactions" value="659"/>
</dbReference>
<dbReference type="IntAct" id="Q99L00">
    <property type="interactions" value="5"/>
</dbReference>
<dbReference type="STRING" id="10090.ENSMUSP00000040802"/>
<dbReference type="iPTMnet" id="Q99L00"/>
<dbReference type="PhosphoSitePlus" id="Q99L00"/>
<dbReference type="jPOST" id="Q99L00"/>
<dbReference type="PaxDb" id="10090-ENSMUSP00000040802"/>
<dbReference type="PeptideAtlas" id="Q99L00"/>
<dbReference type="ProteomicsDB" id="269765">
    <molecule id="Q99L00-1"/>
</dbReference>
<dbReference type="ProteomicsDB" id="269766">
    <molecule id="Q99L00-2"/>
</dbReference>
<dbReference type="Pumba" id="Q99L00"/>
<dbReference type="Antibodypedia" id="27511">
    <property type="antibodies" value="194 antibodies from 25 providers"/>
</dbReference>
<dbReference type="DNASU" id="76478"/>
<dbReference type="Ensembl" id="ENSMUST00000035960.13">
    <molecule id="Q99L00-1"/>
    <property type="protein sequence ID" value="ENSMUSP00000040802.7"/>
    <property type="gene ID" value="ENSMUSG00000035439.14"/>
</dbReference>
<dbReference type="Ensembl" id="ENSMUST00000110071.3">
    <molecule id="Q99L00-2"/>
    <property type="protein sequence ID" value="ENSMUSP00000105698.3"/>
    <property type="gene ID" value="ENSMUSG00000035439.14"/>
</dbReference>
<dbReference type="GeneID" id="76478"/>
<dbReference type="KEGG" id="mmu:76478"/>
<dbReference type="UCSC" id="uc009mcg.2">
    <molecule id="Q99L00-2"/>
    <property type="organism name" value="mouse"/>
</dbReference>
<dbReference type="UCSC" id="uc009mch.2">
    <molecule id="Q99L00-1"/>
    <property type="organism name" value="mouse"/>
</dbReference>
<dbReference type="AGR" id="MGI:1923728"/>
<dbReference type="CTD" id="93323"/>
<dbReference type="MGI" id="MGI:1923728">
    <property type="gene designation" value="Haus8"/>
</dbReference>
<dbReference type="VEuPathDB" id="HostDB:ENSMUSG00000035439"/>
<dbReference type="eggNOG" id="ENOG502S04A">
    <property type="taxonomic scope" value="Eukaryota"/>
</dbReference>
<dbReference type="GeneTree" id="ENSGT00390000010974"/>
<dbReference type="HOGENOM" id="CLU_060977_0_0_1"/>
<dbReference type="InParanoid" id="Q99L00"/>
<dbReference type="OMA" id="TAKMEHN"/>
<dbReference type="OrthoDB" id="10050218at2759"/>
<dbReference type="PhylomeDB" id="Q99L00"/>
<dbReference type="TreeFam" id="TF332998"/>
<dbReference type="Reactome" id="R-MMU-2565942">
    <property type="pathway name" value="Regulation of PLK1 Activity at G2/M Transition"/>
</dbReference>
<dbReference type="Reactome" id="R-MMU-380259">
    <property type="pathway name" value="Loss of Nlp from mitotic centrosomes"/>
</dbReference>
<dbReference type="Reactome" id="R-MMU-380270">
    <property type="pathway name" value="Recruitment of mitotic centrosome proteins and complexes"/>
</dbReference>
<dbReference type="Reactome" id="R-MMU-380284">
    <property type="pathway name" value="Loss of proteins required for interphase microtubule organization from the centrosome"/>
</dbReference>
<dbReference type="Reactome" id="R-MMU-380320">
    <property type="pathway name" value="Recruitment of NuMA to mitotic centrosomes"/>
</dbReference>
<dbReference type="Reactome" id="R-MMU-5620912">
    <property type="pathway name" value="Anchoring of the basal body to the plasma membrane"/>
</dbReference>
<dbReference type="Reactome" id="R-MMU-8854518">
    <property type="pathway name" value="AURKA Activation by TPX2"/>
</dbReference>
<dbReference type="BioGRID-ORCS" id="76478">
    <property type="hits" value="15 hits in 77 CRISPR screens"/>
</dbReference>
<dbReference type="ChiTaRS" id="Haus8">
    <property type="organism name" value="mouse"/>
</dbReference>
<dbReference type="PRO" id="PR:Q99L00"/>
<dbReference type="Proteomes" id="UP000000589">
    <property type="component" value="Chromosome 8"/>
</dbReference>
<dbReference type="RNAct" id="Q99L00">
    <property type="molecule type" value="protein"/>
</dbReference>
<dbReference type="Bgee" id="ENSMUSG00000035439">
    <property type="expression patterns" value="Expressed in granulocyte and 194 other cell types or tissues"/>
</dbReference>
<dbReference type="ExpressionAtlas" id="Q99L00">
    <property type="expression patterns" value="baseline and differential"/>
</dbReference>
<dbReference type="GO" id="GO:0005813">
    <property type="term" value="C:centrosome"/>
    <property type="evidence" value="ECO:0007669"/>
    <property type="project" value="UniProtKB-SubCell"/>
</dbReference>
<dbReference type="GO" id="GO:0005737">
    <property type="term" value="C:cytoplasm"/>
    <property type="evidence" value="ECO:0007669"/>
    <property type="project" value="UniProtKB-SubCell"/>
</dbReference>
<dbReference type="GO" id="GO:0070652">
    <property type="term" value="C:HAUS complex"/>
    <property type="evidence" value="ECO:0000250"/>
    <property type="project" value="UniProtKB"/>
</dbReference>
<dbReference type="GO" id="GO:1990498">
    <property type="term" value="C:mitotic spindle microtubule"/>
    <property type="evidence" value="ECO:0000250"/>
    <property type="project" value="UniProtKB"/>
</dbReference>
<dbReference type="GO" id="GO:0000922">
    <property type="term" value="C:spindle pole"/>
    <property type="evidence" value="ECO:0007669"/>
    <property type="project" value="UniProtKB-SubCell"/>
</dbReference>
<dbReference type="GO" id="GO:0051301">
    <property type="term" value="P:cell division"/>
    <property type="evidence" value="ECO:0007669"/>
    <property type="project" value="UniProtKB-KW"/>
</dbReference>
<dbReference type="GO" id="GO:0007098">
    <property type="term" value="P:centrosome cycle"/>
    <property type="evidence" value="ECO:0000250"/>
    <property type="project" value="UniProtKB"/>
</dbReference>
<dbReference type="GO" id="GO:0051225">
    <property type="term" value="P:spindle assembly"/>
    <property type="evidence" value="ECO:0000250"/>
    <property type="project" value="UniProtKB"/>
</dbReference>
<name>HAUS8_MOUSE</name>
<protein>
    <recommendedName>
        <fullName>HAUS augmin-like complex subunit 8</fullName>
    </recommendedName>
    <alternativeName>
        <fullName>HEC1/NDC80-interacting centrosome-associated protein 1</fullName>
    </alternativeName>
    <alternativeName>
        <fullName>Sarcoma antigen NY-SAR-48 homolog</fullName>
    </alternativeName>
</protein>
<accession>Q99L00</accession>
<accession>Q9CWT4</accession>
<keyword id="KW-0007">Acetylation</keyword>
<keyword id="KW-0025">Alternative splicing</keyword>
<keyword id="KW-0131">Cell cycle</keyword>
<keyword id="KW-0132">Cell division</keyword>
<keyword id="KW-0175">Coiled coil</keyword>
<keyword id="KW-0963">Cytoplasm</keyword>
<keyword id="KW-0206">Cytoskeleton</keyword>
<keyword id="KW-0493">Microtubule</keyword>
<keyword id="KW-0498">Mitosis</keyword>
<keyword id="KW-0597">Phosphoprotein</keyword>
<keyword id="KW-1185">Reference proteome</keyword>
<evidence type="ECO:0000250" key="1"/>
<evidence type="ECO:0000250" key="2">
    <source>
        <dbReference type="UniProtKB" id="Q9BT25"/>
    </source>
</evidence>
<evidence type="ECO:0000255" key="3"/>
<evidence type="ECO:0000256" key="4">
    <source>
        <dbReference type="SAM" id="MobiDB-lite"/>
    </source>
</evidence>
<evidence type="ECO:0000303" key="5">
    <source>
    </source>
</evidence>
<evidence type="ECO:0000305" key="6"/>
<sequence>MADSSERDAGKSAAAGACAVPKTKGRRVQGRRVVESRYLQYDKKAKKVSGAAKEEKPPEGRKASTVPRSREESQVMGTGNLQSTMLEGHGMNPPDLDLSAIDDKILSRKASWPDREMTDKAKSTSFISCDKKRILRKKRRDLQETMDMMESQTLLMTLLSVKMENNLALLEERAEKDLAAMCHEKERLQRQALELRRQLLLRQKHQELAATLDAQIEVLSPLQPVLERFKEEYMTLGRALDTTRHELPMQAVHMEGSGQELLDDLEPALRITLQLLGDLSICSPYATAQVQGASAQEPGASTQLSCLLKELKGLVTEKDLELRRLVSQVVELSSQASKEAALMNQEVWEEAEGALTSSQWYFSPDACRDDSPS</sequence>
<reference key="1">
    <citation type="journal article" date="2005" name="Science">
        <title>The transcriptional landscape of the mammalian genome.</title>
        <authorList>
            <person name="Carninci P."/>
            <person name="Kasukawa T."/>
            <person name="Katayama S."/>
            <person name="Gough J."/>
            <person name="Frith M.C."/>
            <person name="Maeda N."/>
            <person name="Oyama R."/>
            <person name="Ravasi T."/>
            <person name="Lenhard B."/>
            <person name="Wells C."/>
            <person name="Kodzius R."/>
            <person name="Shimokawa K."/>
            <person name="Bajic V.B."/>
            <person name="Brenner S.E."/>
            <person name="Batalov S."/>
            <person name="Forrest A.R."/>
            <person name="Zavolan M."/>
            <person name="Davis M.J."/>
            <person name="Wilming L.G."/>
            <person name="Aidinis V."/>
            <person name="Allen J.E."/>
            <person name="Ambesi-Impiombato A."/>
            <person name="Apweiler R."/>
            <person name="Aturaliya R.N."/>
            <person name="Bailey T.L."/>
            <person name="Bansal M."/>
            <person name="Baxter L."/>
            <person name="Beisel K.W."/>
            <person name="Bersano T."/>
            <person name="Bono H."/>
            <person name="Chalk A.M."/>
            <person name="Chiu K.P."/>
            <person name="Choudhary V."/>
            <person name="Christoffels A."/>
            <person name="Clutterbuck D.R."/>
            <person name="Crowe M.L."/>
            <person name="Dalla E."/>
            <person name="Dalrymple B.P."/>
            <person name="de Bono B."/>
            <person name="Della Gatta G."/>
            <person name="di Bernardo D."/>
            <person name="Down T."/>
            <person name="Engstrom P."/>
            <person name="Fagiolini M."/>
            <person name="Faulkner G."/>
            <person name="Fletcher C.F."/>
            <person name="Fukushima T."/>
            <person name="Furuno M."/>
            <person name="Futaki S."/>
            <person name="Gariboldi M."/>
            <person name="Georgii-Hemming P."/>
            <person name="Gingeras T.R."/>
            <person name="Gojobori T."/>
            <person name="Green R.E."/>
            <person name="Gustincich S."/>
            <person name="Harbers M."/>
            <person name="Hayashi Y."/>
            <person name="Hensch T.K."/>
            <person name="Hirokawa N."/>
            <person name="Hill D."/>
            <person name="Huminiecki L."/>
            <person name="Iacono M."/>
            <person name="Ikeo K."/>
            <person name="Iwama A."/>
            <person name="Ishikawa T."/>
            <person name="Jakt M."/>
            <person name="Kanapin A."/>
            <person name="Katoh M."/>
            <person name="Kawasawa Y."/>
            <person name="Kelso J."/>
            <person name="Kitamura H."/>
            <person name="Kitano H."/>
            <person name="Kollias G."/>
            <person name="Krishnan S.P."/>
            <person name="Kruger A."/>
            <person name="Kummerfeld S.K."/>
            <person name="Kurochkin I.V."/>
            <person name="Lareau L.F."/>
            <person name="Lazarevic D."/>
            <person name="Lipovich L."/>
            <person name="Liu J."/>
            <person name="Liuni S."/>
            <person name="McWilliam S."/>
            <person name="Madan Babu M."/>
            <person name="Madera M."/>
            <person name="Marchionni L."/>
            <person name="Matsuda H."/>
            <person name="Matsuzawa S."/>
            <person name="Miki H."/>
            <person name="Mignone F."/>
            <person name="Miyake S."/>
            <person name="Morris K."/>
            <person name="Mottagui-Tabar S."/>
            <person name="Mulder N."/>
            <person name="Nakano N."/>
            <person name="Nakauchi H."/>
            <person name="Ng P."/>
            <person name="Nilsson R."/>
            <person name="Nishiguchi S."/>
            <person name="Nishikawa S."/>
            <person name="Nori F."/>
            <person name="Ohara O."/>
            <person name="Okazaki Y."/>
            <person name="Orlando V."/>
            <person name="Pang K.C."/>
            <person name="Pavan W.J."/>
            <person name="Pavesi G."/>
            <person name="Pesole G."/>
            <person name="Petrovsky N."/>
            <person name="Piazza S."/>
            <person name="Reed J."/>
            <person name="Reid J.F."/>
            <person name="Ring B.Z."/>
            <person name="Ringwald M."/>
            <person name="Rost B."/>
            <person name="Ruan Y."/>
            <person name="Salzberg S.L."/>
            <person name="Sandelin A."/>
            <person name="Schneider C."/>
            <person name="Schoenbach C."/>
            <person name="Sekiguchi K."/>
            <person name="Semple C.A."/>
            <person name="Seno S."/>
            <person name="Sessa L."/>
            <person name="Sheng Y."/>
            <person name="Shibata Y."/>
            <person name="Shimada H."/>
            <person name="Shimada K."/>
            <person name="Silva D."/>
            <person name="Sinclair B."/>
            <person name="Sperling S."/>
            <person name="Stupka E."/>
            <person name="Sugiura K."/>
            <person name="Sultana R."/>
            <person name="Takenaka Y."/>
            <person name="Taki K."/>
            <person name="Tammoja K."/>
            <person name="Tan S.L."/>
            <person name="Tang S."/>
            <person name="Taylor M.S."/>
            <person name="Tegner J."/>
            <person name="Teichmann S.A."/>
            <person name="Ueda H.R."/>
            <person name="van Nimwegen E."/>
            <person name="Verardo R."/>
            <person name="Wei C.L."/>
            <person name="Yagi K."/>
            <person name="Yamanishi H."/>
            <person name="Zabarovsky E."/>
            <person name="Zhu S."/>
            <person name="Zimmer A."/>
            <person name="Hide W."/>
            <person name="Bult C."/>
            <person name="Grimmond S.M."/>
            <person name="Teasdale R.D."/>
            <person name="Liu E.T."/>
            <person name="Brusic V."/>
            <person name="Quackenbush J."/>
            <person name="Wahlestedt C."/>
            <person name="Mattick J.S."/>
            <person name="Hume D.A."/>
            <person name="Kai C."/>
            <person name="Sasaki D."/>
            <person name="Tomaru Y."/>
            <person name="Fukuda S."/>
            <person name="Kanamori-Katayama M."/>
            <person name="Suzuki M."/>
            <person name="Aoki J."/>
            <person name="Arakawa T."/>
            <person name="Iida J."/>
            <person name="Imamura K."/>
            <person name="Itoh M."/>
            <person name="Kato T."/>
            <person name="Kawaji H."/>
            <person name="Kawagashira N."/>
            <person name="Kawashima T."/>
            <person name="Kojima M."/>
            <person name="Kondo S."/>
            <person name="Konno H."/>
            <person name="Nakano K."/>
            <person name="Ninomiya N."/>
            <person name="Nishio T."/>
            <person name="Okada M."/>
            <person name="Plessy C."/>
            <person name="Shibata K."/>
            <person name="Shiraki T."/>
            <person name="Suzuki S."/>
            <person name="Tagami M."/>
            <person name="Waki K."/>
            <person name="Watahiki A."/>
            <person name="Okamura-Oho Y."/>
            <person name="Suzuki H."/>
            <person name="Kawai J."/>
            <person name="Hayashizaki Y."/>
        </authorList>
    </citation>
    <scope>NUCLEOTIDE SEQUENCE [LARGE SCALE MRNA] (ISOFORM 2)</scope>
    <source>
        <strain>C57BL/6J</strain>
    </source>
</reference>
<reference key="2">
    <citation type="journal article" date="2004" name="Genome Res.">
        <title>The status, quality, and expansion of the NIH full-length cDNA project: the Mammalian Gene Collection (MGC).</title>
        <authorList>
            <consortium name="The MGC Project Team"/>
        </authorList>
    </citation>
    <scope>NUCLEOTIDE SEQUENCE [LARGE SCALE MRNA] (ISOFORM 1)</scope>
    <source>
        <tissue>Mammary tumor</tissue>
    </source>
</reference>
<reference key="3">
    <citation type="journal article" date="2010" name="Cell">
        <title>A tissue-specific atlas of mouse protein phosphorylation and expression.</title>
        <authorList>
            <person name="Huttlin E.L."/>
            <person name="Jedrychowski M.P."/>
            <person name="Elias J.E."/>
            <person name="Goswami T."/>
            <person name="Rad R."/>
            <person name="Beausoleil S.A."/>
            <person name="Villen J."/>
            <person name="Haas W."/>
            <person name="Sowa M.E."/>
            <person name="Gygi S.P."/>
        </authorList>
    </citation>
    <scope>IDENTIFICATION BY MASS SPECTROMETRY [LARGE SCALE ANALYSIS]</scope>
    <source>
        <tissue>Spleen</tissue>
    </source>
</reference>
<proteinExistence type="evidence at protein level"/>
<organism>
    <name type="scientific">Mus musculus</name>
    <name type="common">Mouse</name>
    <dbReference type="NCBI Taxonomy" id="10090"/>
    <lineage>
        <taxon>Eukaryota</taxon>
        <taxon>Metazoa</taxon>
        <taxon>Chordata</taxon>
        <taxon>Craniata</taxon>
        <taxon>Vertebrata</taxon>
        <taxon>Euteleostomi</taxon>
        <taxon>Mammalia</taxon>
        <taxon>Eutheria</taxon>
        <taxon>Euarchontoglires</taxon>
        <taxon>Glires</taxon>
        <taxon>Rodentia</taxon>
        <taxon>Myomorpha</taxon>
        <taxon>Muroidea</taxon>
        <taxon>Muridae</taxon>
        <taxon>Murinae</taxon>
        <taxon>Mus</taxon>
        <taxon>Mus</taxon>
    </lineage>
</organism>
<feature type="initiator methionine" description="Removed" evidence="2">
    <location>
        <position position="1"/>
    </location>
</feature>
<feature type="chain" id="PRO_0000319938" description="HAUS augmin-like complex subunit 8">
    <location>
        <begin position="2"/>
        <end position="373"/>
    </location>
</feature>
<feature type="region of interest" description="Disordered" evidence="4">
    <location>
        <begin position="1"/>
        <end position="76"/>
    </location>
</feature>
<feature type="coiled-coil region" evidence="3">
    <location>
        <begin position="130"/>
        <end position="204"/>
    </location>
</feature>
<feature type="compositionally biased region" description="Basic and acidic residues" evidence="4">
    <location>
        <begin position="1"/>
        <end position="10"/>
    </location>
</feature>
<feature type="compositionally biased region" description="Basic and acidic residues" evidence="4">
    <location>
        <begin position="32"/>
        <end position="43"/>
    </location>
</feature>
<feature type="compositionally biased region" description="Basic and acidic residues" evidence="4">
    <location>
        <begin position="52"/>
        <end position="73"/>
    </location>
</feature>
<feature type="modified residue" description="N-acetylalanine" evidence="2">
    <location>
        <position position="2"/>
    </location>
</feature>
<feature type="modified residue" description="Phosphoserine" evidence="2">
    <location>
        <position position="99"/>
    </location>
</feature>
<feature type="splice variant" id="VSP_031544" description="In isoform 2." evidence="5">
    <location>
        <position position="71"/>
    </location>
</feature>
<feature type="sequence conflict" description="In Ref. 2; AAH03935." evidence="6" ref="2">
    <original>G</original>
    <variation>V</variation>
    <location>
        <position position="50"/>
    </location>
</feature>
<feature type="sequence conflict" description="In Ref. 1; BAB26909." evidence="6" ref="1">
    <original>Q</original>
    <variation>R</variation>
    <location>
        <position position="259"/>
    </location>
</feature>
<comment type="function">
    <text evidence="1">Contributes to mitotic spindle assembly, maintenance of centrosome integrity and completion of cytokinesis as part of the HAUS augmin-like complex.</text>
</comment>
<comment type="subunit">
    <text evidence="2">Component of the HAUS augmin-like complex. The complex interacts with the gamma-tubulin ring complex and this interaction is required for spindle assembly. Associates with microtubules. The interaction with microtubules is strong during mitosis, while it is weak or absent during interphase. It is unclear whether this interaction is direct or indirect (By similarity). Interacts with EML3 (phosphorylated at 'Thr-882') and TUBG1 (By similarity).</text>
</comment>
<comment type="subcellular location">
    <subcellularLocation>
        <location evidence="2">Cytoplasm</location>
    </subcellularLocation>
    <subcellularLocation>
        <location evidence="2">Cytoplasm</location>
        <location evidence="2">Cytoskeleton</location>
        <location evidence="2">Microtubule organizing center</location>
        <location evidence="2">Centrosome</location>
    </subcellularLocation>
    <subcellularLocation>
        <location evidence="2">Cytoplasm</location>
        <location evidence="2">Cytoskeleton</location>
        <location evidence="2">Spindle</location>
    </subcellularLocation>
    <subcellularLocation>
        <location evidence="2">Cytoplasm</location>
        <location evidence="2">Cytoskeleton</location>
        <location evidence="2">Spindle pole</location>
    </subcellularLocation>
    <text evidence="2">During interphase, primarily cytoplasmic and associates with centrosomes and with the mitotic spindles, preferentially at the spindle pole vicinity. During anaphase and telophase, additionally associates with the spindle midzone and midbody, respectively. Localizes to mitotic spindle microtubules (By similarity).</text>
</comment>
<comment type="alternative products">
    <event type="alternative splicing"/>
    <isoform>
        <id>Q99L00-1</id>
        <name>1</name>
        <sequence type="displayed"/>
    </isoform>
    <isoform>
        <id>Q99L00-2</id>
        <name>2</name>
        <sequence type="described" ref="VSP_031544"/>
    </isoform>
</comment>
<comment type="similarity">
    <text evidence="6">Belongs to the HAUS8 family.</text>
</comment>
<gene>
    <name type="primary">Haus8</name>
    <name type="synonym">Hice1</name>
</gene>